<dbReference type="EC" id="6.1.1.16" evidence="1"/>
<dbReference type="EMBL" id="CP000013">
    <property type="protein sequence ID" value="AAU07448.1"/>
    <property type="molecule type" value="Genomic_DNA"/>
</dbReference>
<dbReference type="RefSeq" id="WP_011193906.1">
    <property type="nucleotide sequence ID" value="NZ_CP028872.1"/>
</dbReference>
<dbReference type="SMR" id="Q660S3"/>
<dbReference type="GeneID" id="45161392"/>
<dbReference type="KEGG" id="bga:BG0612"/>
<dbReference type="eggNOG" id="COG0215">
    <property type="taxonomic scope" value="Bacteria"/>
</dbReference>
<dbReference type="HOGENOM" id="CLU_013528_0_1_12"/>
<dbReference type="OrthoDB" id="9815130at2"/>
<dbReference type="Proteomes" id="UP000002276">
    <property type="component" value="Chromosome"/>
</dbReference>
<dbReference type="GO" id="GO:0005829">
    <property type="term" value="C:cytosol"/>
    <property type="evidence" value="ECO:0007669"/>
    <property type="project" value="TreeGrafter"/>
</dbReference>
<dbReference type="GO" id="GO:0005524">
    <property type="term" value="F:ATP binding"/>
    <property type="evidence" value="ECO:0007669"/>
    <property type="project" value="UniProtKB-UniRule"/>
</dbReference>
<dbReference type="GO" id="GO:0004817">
    <property type="term" value="F:cysteine-tRNA ligase activity"/>
    <property type="evidence" value="ECO:0007669"/>
    <property type="project" value="UniProtKB-UniRule"/>
</dbReference>
<dbReference type="GO" id="GO:0008270">
    <property type="term" value="F:zinc ion binding"/>
    <property type="evidence" value="ECO:0007669"/>
    <property type="project" value="UniProtKB-UniRule"/>
</dbReference>
<dbReference type="GO" id="GO:0006423">
    <property type="term" value="P:cysteinyl-tRNA aminoacylation"/>
    <property type="evidence" value="ECO:0007669"/>
    <property type="project" value="UniProtKB-UniRule"/>
</dbReference>
<dbReference type="CDD" id="cd00672">
    <property type="entry name" value="CysRS_core"/>
    <property type="match status" value="1"/>
</dbReference>
<dbReference type="Gene3D" id="1.20.120.1910">
    <property type="entry name" value="Cysteine-tRNA ligase, C-terminal anti-codon recognition domain"/>
    <property type="match status" value="1"/>
</dbReference>
<dbReference type="Gene3D" id="3.40.50.620">
    <property type="entry name" value="HUPs"/>
    <property type="match status" value="1"/>
</dbReference>
<dbReference type="HAMAP" id="MF_00041">
    <property type="entry name" value="Cys_tRNA_synth"/>
    <property type="match status" value="1"/>
</dbReference>
<dbReference type="InterPro" id="IPR015803">
    <property type="entry name" value="Cys-tRNA-ligase"/>
</dbReference>
<dbReference type="InterPro" id="IPR024909">
    <property type="entry name" value="Cys-tRNA/MSH_ligase"/>
</dbReference>
<dbReference type="InterPro" id="IPR014729">
    <property type="entry name" value="Rossmann-like_a/b/a_fold"/>
</dbReference>
<dbReference type="InterPro" id="IPR032678">
    <property type="entry name" value="tRNA-synt_1_cat_dom"/>
</dbReference>
<dbReference type="InterPro" id="IPR009080">
    <property type="entry name" value="tRNAsynth_Ia_anticodon-bd"/>
</dbReference>
<dbReference type="NCBIfam" id="TIGR00435">
    <property type="entry name" value="cysS"/>
    <property type="match status" value="1"/>
</dbReference>
<dbReference type="NCBIfam" id="NF011107">
    <property type="entry name" value="PRK14534.1"/>
    <property type="match status" value="1"/>
</dbReference>
<dbReference type="PANTHER" id="PTHR10890:SF3">
    <property type="entry name" value="CYSTEINE--TRNA LIGASE, CYTOPLASMIC"/>
    <property type="match status" value="1"/>
</dbReference>
<dbReference type="PANTHER" id="PTHR10890">
    <property type="entry name" value="CYSTEINYL-TRNA SYNTHETASE"/>
    <property type="match status" value="1"/>
</dbReference>
<dbReference type="Pfam" id="PF01406">
    <property type="entry name" value="tRNA-synt_1e"/>
    <property type="match status" value="1"/>
</dbReference>
<dbReference type="PRINTS" id="PR00983">
    <property type="entry name" value="TRNASYNTHCYS"/>
</dbReference>
<dbReference type="SUPFAM" id="SSF47323">
    <property type="entry name" value="Anticodon-binding domain of a subclass of class I aminoacyl-tRNA synthetases"/>
    <property type="match status" value="1"/>
</dbReference>
<dbReference type="SUPFAM" id="SSF52374">
    <property type="entry name" value="Nucleotidylyl transferase"/>
    <property type="match status" value="1"/>
</dbReference>
<comment type="catalytic activity">
    <reaction evidence="1">
        <text>tRNA(Cys) + L-cysteine + ATP = L-cysteinyl-tRNA(Cys) + AMP + diphosphate</text>
        <dbReference type="Rhea" id="RHEA:17773"/>
        <dbReference type="Rhea" id="RHEA-COMP:9661"/>
        <dbReference type="Rhea" id="RHEA-COMP:9679"/>
        <dbReference type="ChEBI" id="CHEBI:30616"/>
        <dbReference type="ChEBI" id="CHEBI:33019"/>
        <dbReference type="ChEBI" id="CHEBI:35235"/>
        <dbReference type="ChEBI" id="CHEBI:78442"/>
        <dbReference type="ChEBI" id="CHEBI:78517"/>
        <dbReference type="ChEBI" id="CHEBI:456215"/>
        <dbReference type="EC" id="6.1.1.16"/>
    </reaction>
</comment>
<comment type="cofactor">
    <cofactor evidence="1">
        <name>Zn(2+)</name>
        <dbReference type="ChEBI" id="CHEBI:29105"/>
    </cofactor>
    <text evidence="1">Binds 1 zinc ion per subunit.</text>
</comment>
<comment type="subunit">
    <text evidence="1">Monomer.</text>
</comment>
<comment type="subcellular location">
    <subcellularLocation>
        <location evidence="1">Cytoplasm</location>
    </subcellularLocation>
</comment>
<comment type="similarity">
    <text evidence="1">Belongs to the class-I aminoacyl-tRNA synthetase family.</text>
</comment>
<accession>Q660S3</accession>
<evidence type="ECO:0000255" key="1">
    <source>
        <dbReference type="HAMAP-Rule" id="MF_00041"/>
    </source>
</evidence>
<protein>
    <recommendedName>
        <fullName evidence="1">Cysteine--tRNA ligase</fullName>
        <ecNumber evidence="1">6.1.1.16</ecNumber>
    </recommendedName>
    <alternativeName>
        <fullName evidence="1">Cysteinyl-tRNA synthetase</fullName>
        <shortName evidence="1">CysRS</shortName>
    </alternativeName>
</protein>
<organism>
    <name type="scientific">Borrelia garinii subsp. bavariensis (strain ATCC BAA-2496 / DSM 23469 / PBi)</name>
    <name type="common">Borreliella bavariensis</name>
    <dbReference type="NCBI Taxonomy" id="290434"/>
    <lineage>
        <taxon>Bacteria</taxon>
        <taxon>Pseudomonadati</taxon>
        <taxon>Spirochaetota</taxon>
        <taxon>Spirochaetia</taxon>
        <taxon>Spirochaetales</taxon>
        <taxon>Borreliaceae</taxon>
        <taxon>Borreliella</taxon>
    </lineage>
</organism>
<feature type="chain" id="PRO_0000159360" description="Cysteine--tRNA ligase">
    <location>
        <begin position="1"/>
        <end position="480"/>
    </location>
</feature>
<feature type="short sequence motif" description="'HIGH' region">
    <location>
        <begin position="29"/>
        <end position="39"/>
    </location>
</feature>
<feature type="short sequence motif" description="'KMSKS' region">
    <location>
        <begin position="278"/>
        <end position="282"/>
    </location>
</feature>
<feature type="binding site" evidence="1">
    <location>
        <position position="27"/>
    </location>
    <ligand>
        <name>Zn(2+)</name>
        <dbReference type="ChEBI" id="CHEBI:29105"/>
    </ligand>
</feature>
<feature type="binding site" evidence="1">
    <location>
        <position position="221"/>
    </location>
    <ligand>
        <name>Zn(2+)</name>
        <dbReference type="ChEBI" id="CHEBI:29105"/>
    </ligand>
</feature>
<feature type="binding site" evidence="1">
    <location>
        <position position="246"/>
    </location>
    <ligand>
        <name>Zn(2+)</name>
        <dbReference type="ChEBI" id="CHEBI:29105"/>
    </ligand>
</feature>
<feature type="binding site" evidence="1">
    <location>
        <position position="250"/>
    </location>
    <ligand>
        <name>Zn(2+)</name>
        <dbReference type="ChEBI" id="CHEBI:29105"/>
    </ligand>
</feature>
<feature type="binding site" evidence="1">
    <location>
        <position position="281"/>
    </location>
    <ligand>
        <name>ATP</name>
        <dbReference type="ChEBI" id="CHEBI:30616"/>
    </ligand>
</feature>
<keyword id="KW-0030">Aminoacyl-tRNA synthetase</keyword>
<keyword id="KW-0067">ATP-binding</keyword>
<keyword id="KW-0963">Cytoplasm</keyword>
<keyword id="KW-0436">Ligase</keyword>
<keyword id="KW-0479">Metal-binding</keyword>
<keyword id="KW-0547">Nucleotide-binding</keyword>
<keyword id="KW-0648">Protein biosynthesis</keyword>
<keyword id="KW-0862">Zinc</keyword>
<proteinExistence type="inferred from homology"/>
<sequence length="480" mass="56024">MILKLYNTRTKDFSELANFSDVKVYACGPTVYNYAHIGNFRTYIFGDLLIKTLRFLGYKVNYAMNITDIGHLTGDLDDGEDKVAKTAREKGLTVYEISKFFTEAFFKDCKKLNVVYPDKVLIASKHIPNMIEVIKILEEKKFTYFSNGNVYFDTSCFKSYGEMAGIDLIDKDMAFSRVDIDKFKRNKTDFVLWFTNSKFKDQEMKWDSPWGFGYPSWHLECAAMNLEYFKDTLDIHLGGVDHIGVHHINEIAIVECFLNKKWCDIFVHGEFLIMDYNKMSKSHGNFITVKGLEEQNFSPLDFRYLCLTSHYRNQLKFSFNNLKASKIARENMINRLSYFYASLDPADLNMLNKDLKNFGFSIEKEYYDSFVEKVSFDLNVSKGLALLWEVIKSENLGFVSKLKLAFIFDEIISLNLREEILKKSENHNIVIDENMKILLEERRIAKCEKNFKRADEIRDFFAKKGFVLIDTKEGTKVKRG</sequence>
<reference key="1">
    <citation type="journal article" date="2004" name="Nucleic Acids Res.">
        <title>Comparative analysis of the Borrelia garinii genome.</title>
        <authorList>
            <person name="Gloeckner G."/>
            <person name="Lehmann R."/>
            <person name="Romualdi A."/>
            <person name="Pradella S."/>
            <person name="Schulte-Spechtel U."/>
            <person name="Schilhabel M."/>
            <person name="Wilske B."/>
            <person name="Suehnel J."/>
            <person name="Platzer M."/>
        </authorList>
    </citation>
    <scope>NUCLEOTIDE SEQUENCE [LARGE SCALE GENOMIC DNA]</scope>
    <source>
        <strain>ATCC BAA-2496 / DSM 23469 / PBi</strain>
    </source>
</reference>
<gene>
    <name evidence="1" type="primary">cysS</name>
    <name type="ordered locus">BG0612</name>
</gene>
<name>SYC_BORGP</name>